<name>NS1AB_MASV1</name>
<evidence type="ECO:0000250" key="1"/>
<evidence type="ECO:0000250" key="2">
    <source>
        <dbReference type="UniProtKB" id="P0C6K4"/>
    </source>
</evidence>
<evidence type="ECO:0000250" key="3">
    <source>
        <dbReference type="UniProtKB" id="Q3ZN07"/>
    </source>
</evidence>
<evidence type="ECO:0000255" key="4"/>
<evidence type="ECO:0000255" key="5">
    <source>
        <dbReference type="PROSITE-ProRule" id="PRU00539"/>
    </source>
</evidence>
<evidence type="ECO:0000256" key="6">
    <source>
        <dbReference type="SAM" id="MobiDB-lite"/>
    </source>
</evidence>
<evidence type="ECO:0000305" key="7"/>
<protein>
    <recommendedName>
        <fullName>Non-structural polyprotein 1AB</fullName>
    </recommendedName>
    <component>
        <recommendedName>
            <fullName>Protein p19</fullName>
        </recommendedName>
    </component>
    <component>
        <recommendedName>
            <fullName>Transmembrane protein 1A</fullName>
        </recommendedName>
    </component>
    <component>
        <recommendedName>
            <fullName>Serine protease p27</fullName>
            <shortName>p27</shortName>
            <ecNumber evidence="2">3.4.21.-</ecNumber>
        </recommendedName>
    </component>
    <component>
        <recommendedName>
            <fullName>Viral genome-linked protein</fullName>
        </recommendedName>
        <alternativeName>
            <fullName>VPg</fullName>
        </alternativeName>
    </component>
    <component>
        <recommendedName>
            <fullName>Protein p20</fullName>
        </recommendedName>
    </component>
    <component>
        <recommendedName>
            <fullName>RNA-directed RNA polymerase p57</fullName>
            <shortName>p57</shortName>
            <ecNumber>2.7.7.48</ecNumber>
        </recommendedName>
    </component>
</protein>
<proteinExistence type="inferred from homology"/>
<organismHost>
    <name type="scientific">Neovison vison</name>
    <name type="common">American mink</name>
    <name type="synonym">Mustela vison</name>
    <dbReference type="NCBI Taxonomy" id="452646"/>
</organismHost>
<keyword id="KW-0067">ATP-binding</keyword>
<keyword id="KW-0175">Coiled coil</keyword>
<keyword id="KW-0191">Covalent protein-RNA linkage</keyword>
<keyword id="KW-1043">Host membrane</keyword>
<keyword id="KW-0378">Hydrolase</keyword>
<keyword id="KW-0472">Membrane</keyword>
<keyword id="KW-0547">Nucleotide-binding</keyword>
<keyword id="KW-0548">Nucleotidyltransferase</keyword>
<keyword id="KW-0597">Phosphoprotein</keyword>
<keyword id="KW-0645">Protease</keyword>
<keyword id="KW-0688">Ribosomal frameshifting</keyword>
<keyword id="KW-0696">RNA-directed RNA polymerase</keyword>
<keyword id="KW-0720">Serine protease</keyword>
<keyword id="KW-0808">Transferase</keyword>
<keyword id="KW-0812">Transmembrane</keyword>
<keyword id="KW-1133">Transmembrane helix</keyword>
<keyword id="KW-0693">Viral RNA replication</keyword>
<feature type="chain" id="PRO_0000327295" description="Non-structural polyprotein 1AB">
    <location>
        <begin position="1"/>
        <end position="1381"/>
    </location>
</feature>
<feature type="chain" id="PRO_0000327296" description="Protein p19" evidence="4">
    <location>
        <begin position="1"/>
        <end position="195"/>
    </location>
</feature>
<feature type="chain" id="PRO_0000327297" description="Transmembrane protein 1A" evidence="4">
    <location>
        <begin position="196"/>
        <end position="436"/>
    </location>
</feature>
<feature type="chain" id="PRO_0000327298" description="Serine protease p27" evidence="4">
    <location>
        <begin position="437"/>
        <end position="662"/>
    </location>
</feature>
<feature type="chain" id="PRO_0000419590" description="Viral genome-linked protein" evidence="4">
    <location>
        <begin position="666"/>
        <end position="752"/>
    </location>
</feature>
<feature type="chain" id="PRO_0000327299" description="Protein p20" evidence="4">
    <location>
        <begin position="753"/>
        <end position="867"/>
    </location>
</feature>
<feature type="chain" id="PRO_0000327300" description="RNA-directed RNA polymerase p57" evidence="4">
    <location>
        <begin position="868"/>
        <end position="1381"/>
    </location>
</feature>
<feature type="transmembrane region" description="Helical" evidence="4">
    <location>
        <begin position="169"/>
        <end position="189"/>
    </location>
</feature>
<feature type="transmembrane region" description="Helical" evidence="4">
    <location>
        <begin position="249"/>
        <end position="269"/>
    </location>
</feature>
<feature type="transmembrane region" description="Helical" evidence="4">
    <location>
        <begin position="279"/>
        <end position="299"/>
    </location>
</feature>
<feature type="transmembrane region" description="Helical" evidence="4">
    <location>
        <begin position="324"/>
        <end position="344"/>
    </location>
</feature>
<feature type="transmembrane region" description="Helical" evidence="4">
    <location>
        <begin position="365"/>
        <end position="385"/>
    </location>
</feature>
<feature type="domain" description="RdRp catalytic" evidence="5">
    <location>
        <begin position="1122"/>
        <end position="1254"/>
    </location>
</feature>
<feature type="region of interest" description="Disordered" evidence="6">
    <location>
        <begin position="856"/>
        <end position="879"/>
    </location>
</feature>
<feature type="coiled-coil region" evidence="4">
    <location>
        <begin position="121"/>
        <end position="160"/>
    </location>
</feature>
<feature type="coiled-coil region" evidence="4">
    <location>
        <begin position="703"/>
        <end position="732"/>
    </location>
</feature>
<feature type="active site" description="Charge relay system; for serine protease activity" evidence="1">
    <location>
        <position position="477"/>
    </location>
</feature>
<feature type="active site" description="Charge relay system; for serine protease activity" evidence="1">
    <location>
        <position position="506"/>
    </location>
</feature>
<feature type="active site" description="Charge relay system; for serine protease activity" evidence="1">
    <location>
        <position position="569"/>
    </location>
</feature>
<feature type="site" description="Cleavage" evidence="4">
    <location>
        <begin position="195"/>
        <end position="196"/>
    </location>
</feature>
<feature type="site" description="Cleavage" evidence="4">
    <location>
        <begin position="436"/>
        <end position="437"/>
    </location>
</feature>
<feature type="site" description="Cleavage" evidence="4">
    <location>
        <begin position="662"/>
        <end position="663"/>
    </location>
</feature>
<feature type="site" description="Cleavage" evidence="2">
    <location>
        <begin position="665"/>
        <end position="666"/>
    </location>
</feature>
<feature type="site" description="Cleavage" evidence="4">
    <location>
        <begin position="752"/>
        <end position="753"/>
    </location>
</feature>
<feature type="site" description="Cleavage" evidence="4">
    <location>
        <begin position="867"/>
        <end position="868"/>
    </location>
</feature>
<feature type="modified residue" description="O-(5'-phospho-RNA)-tyrosine" evidence="3">
    <location>
        <position position="694"/>
    </location>
</feature>
<reference key="1">
    <citation type="journal article" date="2003" name="J. Gen. Virol.">
        <title>Molecular characterization of a novel astrovirus associated with disease in mink.</title>
        <authorList>
            <person name="Mittelholzer C."/>
            <person name="Hedlund K.O."/>
            <person name="Englund L."/>
            <person name="Dietz H.H."/>
            <person name="Svensson L."/>
        </authorList>
    </citation>
    <scope>NUCLEOTIDE SEQUENCE [GENOMIC RNA]</scope>
</reference>
<organism>
    <name type="scientific">Mink astrovirus 1</name>
    <name type="common">MAstV-1</name>
    <dbReference type="NCBI Taxonomy" id="1239574"/>
    <lineage>
        <taxon>Viruses</taxon>
        <taxon>Riboviria</taxon>
        <taxon>Orthornavirae</taxon>
        <taxon>Pisuviricota</taxon>
        <taxon>Stelpaviricetes</taxon>
        <taxon>Stellavirales</taxon>
        <taxon>Astroviridae</taxon>
        <taxon>Mamastrovirus</taxon>
    </lineage>
</organism>
<accession>Q80KJ7</accession>
<gene>
    <name type="primary">ORF1</name>
</gene>
<comment type="function">
    <molecule>Serine protease p27</molecule>
    <text evidence="2">Responsible for the cleavage of the polyprotein into functional products.</text>
</comment>
<comment type="function">
    <molecule>Viral genome-linked protein</molecule>
    <text evidence="3">Protein covalently attached to the 5' extremity of the genomic and subgenomic RNAs (By similarity). It may serve as a primer for the replicase (By similarity).</text>
</comment>
<comment type="catalytic activity">
    <reaction evidence="5">
        <text>RNA(n) + a ribonucleoside 5'-triphosphate = RNA(n+1) + diphosphate</text>
        <dbReference type="Rhea" id="RHEA:21248"/>
        <dbReference type="Rhea" id="RHEA-COMP:14527"/>
        <dbReference type="Rhea" id="RHEA-COMP:17342"/>
        <dbReference type="ChEBI" id="CHEBI:33019"/>
        <dbReference type="ChEBI" id="CHEBI:61557"/>
        <dbReference type="ChEBI" id="CHEBI:140395"/>
        <dbReference type="EC" id="2.7.7.48"/>
    </reaction>
</comment>
<comment type="subunit">
    <molecule>Serine protease p27</molecule>
    <text evidence="2">Monomer.</text>
</comment>
<comment type="subcellular location">
    <molecule>Transmembrane protein 1A</molecule>
    <subcellularLocation>
        <location evidence="7">Host membrane</location>
        <topology evidence="7">Multi-pass membrane protein</topology>
    </subcellularLocation>
</comment>
<comment type="alternative products">
    <event type="ribosomal frameshifting"/>
    <isoform>
        <id>Q80KJ7-1</id>
        <name>nsp1ab</name>
        <sequence type="displayed"/>
    </isoform>
    <isoform>
        <id>Q80KJ8-1</id>
        <name>nsp1a</name>
        <sequence type="external"/>
    </isoform>
</comment>
<comment type="PTM">
    <text evidence="2">Cleaved by the viral and host proteases (By similarity). The protease is probably autocatalytically cleaved (By similarity).</text>
</comment>
<comment type="miscellaneous">
    <molecule>Isoform nsp1ab</molecule>
    <text>Generated by a ribosomal frameshift at position 865.</text>
</comment>
<comment type="similarity">
    <text evidence="7">Belongs to the astroviridae polyprotein 1AB family.</text>
</comment>
<dbReference type="EC" id="3.4.21.-" evidence="2"/>
<dbReference type="EC" id="2.7.7.48"/>
<dbReference type="EMBL" id="AY179509">
    <property type="protein sequence ID" value="AAO32082.1"/>
    <property type="status" value="ALT_SEQ"/>
    <property type="molecule type" value="Genomic_RNA"/>
</dbReference>
<dbReference type="KEGG" id="vg:29200741"/>
<dbReference type="OrthoDB" id="2087at10239"/>
<dbReference type="Proteomes" id="UP000007773">
    <property type="component" value="Genome"/>
</dbReference>
<dbReference type="GO" id="GO:0033644">
    <property type="term" value="C:host cell membrane"/>
    <property type="evidence" value="ECO:0007669"/>
    <property type="project" value="UniProtKB-SubCell"/>
</dbReference>
<dbReference type="GO" id="GO:0016020">
    <property type="term" value="C:membrane"/>
    <property type="evidence" value="ECO:0007669"/>
    <property type="project" value="UniProtKB-KW"/>
</dbReference>
<dbReference type="GO" id="GO:0005524">
    <property type="term" value="F:ATP binding"/>
    <property type="evidence" value="ECO:0007669"/>
    <property type="project" value="UniProtKB-KW"/>
</dbReference>
<dbReference type="GO" id="GO:0003723">
    <property type="term" value="F:RNA binding"/>
    <property type="evidence" value="ECO:0007669"/>
    <property type="project" value="InterPro"/>
</dbReference>
<dbReference type="GO" id="GO:0003968">
    <property type="term" value="F:RNA-directed RNA polymerase activity"/>
    <property type="evidence" value="ECO:0007669"/>
    <property type="project" value="UniProtKB-KW"/>
</dbReference>
<dbReference type="GO" id="GO:0008236">
    <property type="term" value="F:serine-type peptidase activity"/>
    <property type="evidence" value="ECO:0007669"/>
    <property type="project" value="UniProtKB-KW"/>
</dbReference>
<dbReference type="GO" id="GO:0006351">
    <property type="term" value="P:DNA-templated transcription"/>
    <property type="evidence" value="ECO:0007669"/>
    <property type="project" value="InterPro"/>
</dbReference>
<dbReference type="GO" id="GO:0006508">
    <property type="term" value="P:proteolysis"/>
    <property type="evidence" value="ECO:0007669"/>
    <property type="project" value="UniProtKB-KW"/>
</dbReference>
<dbReference type="GO" id="GO:0039694">
    <property type="term" value="P:viral RNA genome replication"/>
    <property type="evidence" value="ECO:0007669"/>
    <property type="project" value="InterPro"/>
</dbReference>
<dbReference type="GO" id="GO:0075523">
    <property type="term" value="P:viral translational frameshifting"/>
    <property type="evidence" value="ECO:0007669"/>
    <property type="project" value="UniProtKB-KW"/>
</dbReference>
<dbReference type="CDD" id="cd23172">
    <property type="entry name" value="ps-ssRNAv_Astroviridae_RdRp"/>
    <property type="match status" value="1"/>
</dbReference>
<dbReference type="Gene3D" id="3.30.70.270">
    <property type="match status" value="1"/>
</dbReference>
<dbReference type="Gene3D" id="2.40.10.10">
    <property type="entry name" value="Trypsin-like serine proteases"/>
    <property type="match status" value="2"/>
</dbReference>
<dbReference type="InterPro" id="IPR045835">
    <property type="entry name" value="Astro_1A"/>
</dbReference>
<dbReference type="InterPro" id="IPR043502">
    <property type="entry name" value="DNA/RNA_pol_sf"/>
</dbReference>
<dbReference type="InterPro" id="IPR009003">
    <property type="entry name" value="Peptidase_S1_PA"/>
</dbReference>
<dbReference type="InterPro" id="IPR043504">
    <property type="entry name" value="Peptidase_S1_PA_chymotrypsin"/>
</dbReference>
<dbReference type="InterPro" id="IPR043128">
    <property type="entry name" value="Rev_trsase/Diguanyl_cyclase"/>
</dbReference>
<dbReference type="InterPro" id="IPR001205">
    <property type="entry name" value="RNA-dir_pol_C"/>
</dbReference>
<dbReference type="InterPro" id="IPR007094">
    <property type="entry name" value="RNA-dir_pol_PSvirus"/>
</dbReference>
<dbReference type="Pfam" id="PF19415">
    <property type="entry name" value="Astro_1A"/>
    <property type="match status" value="1"/>
</dbReference>
<dbReference type="Pfam" id="PF00680">
    <property type="entry name" value="RdRP_1"/>
    <property type="match status" value="1"/>
</dbReference>
<dbReference type="Pfam" id="PF13365">
    <property type="entry name" value="Trypsin_2"/>
    <property type="match status" value="1"/>
</dbReference>
<dbReference type="SUPFAM" id="SSF56672">
    <property type="entry name" value="DNA/RNA polymerases"/>
    <property type="match status" value="1"/>
</dbReference>
<dbReference type="SUPFAM" id="SSF50494">
    <property type="entry name" value="Trypsin-like serine proteases"/>
    <property type="match status" value="1"/>
</dbReference>
<dbReference type="PROSITE" id="PS50507">
    <property type="entry name" value="RDRP_SSRNA_POS"/>
    <property type="match status" value="1"/>
</dbReference>
<sequence length="1381" mass="156954">MANNTTSALHPRGSGQRCVYDTVLRFGDPDARRRGFQLDEVSHNKLCDIFDSGPLHFAFGDLKVMKVAGGVVTPHKTVVKTVYVSGVQEGNDYVTFAFTPGPNEWREVDPRIDKRTALVGVLVQEHKKLDSDLKESRRELSQLKLEHSLLRHDYERLVREKPGPAMRTFKFSAVIFYAFFLGFLLMSAVKGEVYGRCLDSELNLNGNPEVCLHWEEVKSFSLQVALADFWNMTLDYYATVAPQSPLMDLALGYFPYFANWHMAAFLVGTAHVVAAERPLYMLVTLVLATLSRFQLVALAAVPMLDMPSSIGLWVTMVLFAIDQAFAILASVLISVLLLILCLAMNDVDYGALLRGCVTLVSATVFSHLVSFLHAPGWFTIIAILIYRIPKVLSYVSAERVDIKGPDGKIKETQNANPSWITKMSGLKNFFQRAFRQKVRTGVNPTTRIIPNSLVVIDAKDGRGTGFRVRNYLVTAGHVVGADTTVRVRWADVTSFAHVVYRVPNKDIVLLTLPAEYNSLHSYKLAKEVVDGTVVVVSNGDGGALSVGISEGVIVGESMTYAINTADGMSGSPLTTTDGRLIGVHQQNTGFTGGAVIFRDTDFPQPKKPQREADLEAKVAELEKALAAYTQSATGEDIVGLVRVAIQREMEVLRKELSNEFGQAKGKTKHKRRIMAAARSGGKRKPGKVWTEEEYKKLLEEGFTRDQLREMAEAAREADDDFDDYEEEKNEVDYPVWSDHDSDEEIDRDWFGQNLPTWSSAWSDFEPELDPDVTKTLPCHLEDKFSLKHYIITEADLKHFGQEMKEYMDHLDAVIKTHTEKGKWCPNTNTEEILKDLNAMWFKLNHTMWKNGVAPFMQRKKQKPKKREEGPERGPINPDEMRLDHWEKMMAPPDAGRRLVPDDYPVIGKLPINRPISDWDEPVDDLLNLLPPAPDSSAYGPAVWGPEAYVKSFEKFTYAKPRDSIKRDFPREWKFACQVLRREFDFLEGSVIMDITATSKNADSTCAYPKCNYWKTEAEYLSERGYQDYVSEYKRIHGGARPKVLWLLFLKKEILKVKKINDSDIRQIVCADPIFARIGNAFEEHQNTLMKHRTATRMPQCGWTPFFNGFKRRIERLLSRKNSVFIEFDWTRYDGTIPREIFAKIKSFRFSCLAEEFQTDANRAMYQWYCDSLLDRYVLMPSGEVTRQTKGNPSGQISTTMDNNLCNVFFQAFEYAYIHPEKSIEELRESWDRCDSLIYGDDRLTTFDHVPPDYVDRVVHMYKDVFGMWVKPEKVIVSDTPVGLSFCGFTVGPDLMPVPTDCDKLVASLVTPTKKLQDIVALYSKVLCYRILGHNLSDEHEFKRYVRVALEVLARHIRNLGGEEPVHVTERLLDKLWRGGPK</sequence>